<name>CMIP5_BOVIN</name>
<gene>
    <name type="primary">CIMIP5</name>
</gene>
<keyword id="KW-0025">Alternative splicing</keyword>
<keyword id="KW-0966">Cell projection</keyword>
<keyword id="KW-1185">Reference proteome</keyword>
<comment type="subcellular location">
    <subcellularLocation>
        <location evidence="1">Cell projection</location>
        <location evidence="1">Cilium</location>
    </subcellularLocation>
</comment>
<comment type="alternative products">
    <event type="alternative splicing"/>
    <isoform>
        <id>Q1JPL0-1</id>
        <name>1</name>
        <sequence type="displayed"/>
    </isoform>
    <isoform>
        <id>Q1JPL0-2</id>
        <name>2</name>
        <sequence type="described" ref="VSP_028837"/>
    </isoform>
    <isoform>
        <id>Q1JPL0-3</id>
        <name>3</name>
        <sequence type="described" ref="VSP_028835 VSP_028836"/>
    </isoform>
</comment>
<accession>Q1JPL0</accession>
<accession>A6QQ13</accession>
<sequence>MGSRPTPGLQRTTSAEYRLPSTRPPASVPSTAPGGPVVGRGPTGGPQAPKAKWSALGADGVQRDQLWRELLEAERRSQQRWAQNWSFLKDYDPMGNKKEPVKLPDHVPRFSDTVPNSTNRAVGSRVDTPLGKTLIGLDFFFVEGARKKKLEEELQPI</sequence>
<proteinExistence type="evidence at transcript level"/>
<feature type="chain" id="PRO_0000307801" description="Ciliary microtubule inner protein 5">
    <location>
        <begin position="1"/>
        <end position="157"/>
    </location>
</feature>
<feature type="region of interest" description="Disordered" evidence="2">
    <location>
        <begin position="1"/>
        <end position="57"/>
    </location>
</feature>
<feature type="region of interest" description="Disordered" evidence="2">
    <location>
        <begin position="92"/>
        <end position="124"/>
    </location>
</feature>
<feature type="compositionally biased region" description="Basic and acidic residues" evidence="2">
    <location>
        <begin position="92"/>
        <end position="109"/>
    </location>
</feature>
<feature type="splice variant" id="VSP_028835" description="In isoform 3." evidence="4">
    <original>QNWSF</original>
    <variation>TRRSP</variation>
    <location>
        <begin position="83"/>
        <end position="87"/>
    </location>
</feature>
<feature type="splice variant" id="VSP_028836" description="In isoform 3." evidence="4">
    <location>
        <begin position="88"/>
        <end position="157"/>
    </location>
</feature>
<feature type="splice variant" id="VSP_028837" description="In isoform 2." evidence="3">
    <original>GNKKEPVKLPDHVPRFSDTVPNSTNRAVGSRVDTPLGKTLIGLDFFFVEGARKKKLEEELQPI</original>
    <variation>VRQTMLPSEMLALGVFIHAPHVY</variation>
    <location>
        <begin position="95"/>
        <end position="157"/>
    </location>
</feature>
<protein>
    <recommendedName>
        <fullName>Ciliary microtubule inner protein 5</fullName>
    </recommendedName>
</protein>
<dbReference type="EMBL" id="BT025343">
    <property type="protein sequence ID" value="ABF57299.1"/>
    <property type="molecule type" value="mRNA"/>
</dbReference>
<dbReference type="EMBL" id="BC149591">
    <property type="protein sequence ID" value="AAI49592.1"/>
    <property type="molecule type" value="mRNA"/>
</dbReference>
<dbReference type="RefSeq" id="NP_001068948.2">
    <molecule id="Q1JPL0-1"/>
    <property type="nucleotide sequence ID" value="NM_001075480.2"/>
</dbReference>
<dbReference type="RefSeq" id="NP_001244018.1">
    <molecule id="Q1JPL0-3"/>
    <property type="nucleotide sequence ID" value="NM_001257089.1"/>
</dbReference>
<dbReference type="FunCoup" id="Q1JPL0">
    <property type="interactions" value="57"/>
</dbReference>
<dbReference type="PaxDb" id="9913-ENSBTAP00000002474"/>
<dbReference type="GeneID" id="510955"/>
<dbReference type="KEGG" id="bta:510955"/>
<dbReference type="CTD" id="510955"/>
<dbReference type="VEuPathDB" id="HostDB:ENSBTAG00000001903"/>
<dbReference type="eggNOG" id="ENOG502S2T8">
    <property type="taxonomic scope" value="Eukaryota"/>
</dbReference>
<dbReference type="HOGENOM" id="CLU_101818_0_0_1"/>
<dbReference type="InParanoid" id="Q1JPL0"/>
<dbReference type="OrthoDB" id="9972212at2759"/>
<dbReference type="TreeFam" id="TF329466"/>
<dbReference type="Proteomes" id="UP000009136">
    <property type="component" value="Chromosome 11"/>
</dbReference>
<dbReference type="Bgee" id="ENSBTAG00000001903">
    <property type="expression patterns" value="Expressed in olfactory segment of nasal mucosa and 60 other cell types or tissues"/>
</dbReference>
<dbReference type="GO" id="GO:0005929">
    <property type="term" value="C:cilium"/>
    <property type="evidence" value="ECO:0000250"/>
    <property type="project" value="UniProtKB"/>
</dbReference>
<dbReference type="InterPro" id="IPR020339">
    <property type="entry name" value="C20orf85-like"/>
</dbReference>
<dbReference type="PANTHER" id="PTHR31909">
    <property type="entry name" value="CHROMOSOME 20 ORF85 FAMILY MEMBER"/>
    <property type="match status" value="1"/>
</dbReference>
<dbReference type="PANTHER" id="PTHR31909:SF2">
    <property type="entry name" value="RIKEN CDNA 2410004P03 GENE"/>
    <property type="match status" value="1"/>
</dbReference>
<dbReference type="Pfam" id="PF14945">
    <property type="entry name" value="LLC1"/>
    <property type="match status" value="1"/>
</dbReference>
<evidence type="ECO:0000250" key="1">
    <source>
        <dbReference type="UniProtKB" id="Q96LR7"/>
    </source>
</evidence>
<evidence type="ECO:0000256" key="2">
    <source>
        <dbReference type="SAM" id="MobiDB-lite"/>
    </source>
</evidence>
<evidence type="ECO:0000303" key="3">
    <source>
    </source>
</evidence>
<evidence type="ECO:0000303" key="4">
    <source ref="3"/>
</evidence>
<reference key="1">
    <citation type="journal article" date="2005" name="BMC Genomics">
        <title>Characterization of 954 bovine full-CDS cDNA sequences.</title>
        <authorList>
            <person name="Harhay G.P."/>
            <person name="Sonstegard T.S."/>
            <person name="Keele J.W."/>
            <person name="Heaton M.P."/>
            <person name="Clawson M.L."/>
            <person name="Snelling W.M."/>
            <person name="Wiedmann R.T."/>
            <person name="Van Tassell C.P."/>
            <person name="Smith T.P.L."/>
        </authorList>
    </citation>
    <scope>NUCLEOTIDE SEQUENCE [LARGE SCALE MRNA] (ISOFORM 2)</scope>
</reference>
<reference key="2">
    <citation type="journal article" date="2009" name="Science">
        <title>The genome sequence of taurine cattle: a window to ruminant biology and evolution.</title>
        <authorList>
            <consortium name="The bovine genome sequencing and analysis consortium"/>
        </authorList>
    </citation>
    <scope>NUCLEOTIDE SEQUENCE [LARGE SCALE GENOMIC DNA]</scope>
    <source>
        <strain>Hereford</strain>
    </source>
</reference>
<reference key="3">
    <citation type="submission" date="2007-07" db="EMBL/GenBank/DDBJ databases">
        <authorList>
            <consortium name="NIH - Mammalian Gene Collection (MGC) project"/>
        </authorList>
    </citation>
    <scope>NUCLEOTIDE SEQUENCE [LARGE SCALE MRNA] (ISOFORM 3)</scope>
    <source>
        <strain>Hereford</strain>
        <tissue>Hypothalamus</tissue>
    </source>
</reference>
<organism>
    <name type="scientific">Bos taurus</name>
    <name type="common">Bovine</name>
    <dbReference type="NCBI Taxonomy" id="9913"/>
    <lineage>
        <taxon>Eukaryota</taxon>
        <taxon>Metazoa</taxon>
        <taxon>Chordata</taxon>
        <taxon>Craniata</taxon>
        <taxon>Vertebrata</taxon>
        <taxon>Euteleostomi</taxon>
        <taxon>Mammalia</taxon>
        <taxon>Eutheria</taxon>
        <taxon>Laurasiatheria</taxon>
        <taxon>Artiodactyla</taxon>
        <taxon>Ruminantia</taxon>
        <taxon>Pecora</taxon>
        <taxon>Bovidae</taxon>
        <taxon>Bovinae</taxon>
        <taxon>Bos</taxon>
    </lineage>
</organism>